<protein>
    <recommendedName>
        <fullName evidence="8">Transcription factor TOXE</fullName>
    </recommendedName>
    <alternativeName>
        <fullName evidence="7">TOX2 HC-toxin biosynthesis cluster protein TOXE</fullName>
    </alternativeName>
</protein>
<feature type="chain" id="PRO_0000076640" description="Transcription factor TOXE">
    <location>
        <begin position="1"/>
        <end position="441"/>
    </location>
</feature>
<feature type="repeat" description="ANK 1" evidence="2">
    <location>
        <begin position="289"/>
        <end position="318"/>
    </location>
</feature>
<feature type="repeat" description="ANK 2" evidence="2">
    <location>
        <begin position="322"/>
        <end position="351"/>
    </location>
</feature>
<feature type="repeat" description="ANK 3" evidence="2">
    <location>
        <begin position="355"/>
        <end position="384"/>
    </location>
</feature>
<feature type="repeat" description="ANK 4" evidence="2">
    <location>
        <begin position="413"/>
        <end position="440"/>
    </location>
</feature>
<feature type="region of interest" description="Basic DNA-binding region" evidence="1">
    <location>
        <begin position="14"/>
        <end position="40"/>
    </location>
</feature>
<feature type="region of interest" description="Disordered" evidence="3">
    <location>
        <begin position="209"/>
        <end position="243"/>
    </location>
</feature>
<feature type="compositionally biased region" description="Basic and acidic residues" evidence="3">
    <location>
        <begin position="212"/>
        <end position="221"/>
    </location>
</feature>
<feature type="compositionally biased region" description="Polar residues" evidence="3">
    <location>
        <begin position="228"/>
        <end position="241"/>
    </location>
</feature>
<organism>
    <name type="scientific">Cochliobolus carbonum</name>
    <name type="common">Maize leaf spot fungus</name>
    <name type="synonym">Bipolaris zeicola</name>
    <dbReference type="NCBI Taxonomy" id="5017"/>
    <lineage>
        <taxon>Eukaryota</taxon>
        <taxon>Fungi</taxon>
        <taxon>Dikarya</taxon>
        <taxon>Ascomycota</taxon>
        <taxon>Pezizomycotina</taxon>
        <taxon>Dothideomycetes</taxon>
        <taxon>Pleosporomycetidae</taxon>
        <taxon>Pleosporales</taxon>
        <taxon>Pleosporineae</taxon>
        <taxon>Pleosporaceae</taxon>
        <taxon>Bipolaris</taxon>
    </lineage>
</organism>
<sequence>MGTTSPNSEKRQITDINERRKLQNRVAQRKYRTRQKTRMKLAEAVLNDYTYIHPTLGTIQSKKKSPLTMECDRSSASYPDLSSYAEICSETRSETQATRARQLTSQRTCFRESVDNNQADSHAQLSRCLNRQEMFYGISGETEFSEGDTRDRVECIDPNLTRGWLDMDLRSGTPNSSTVVDCGLCTVGANSQPPTRTNVQEAIETLELFEPNDQRKTENLPREPCGSCPSSSHGYSPTSGNPSTLLLTPSESLMNSVIVTSDSPLLAADDKSPGDLVISEANTHGPKEDQFSPLMTAISLGRLDIARILLQSGAPLDIPDDSGKTALHRAVGRRELHMVEALLNLGAEMLATDHEGNSLLHIAVKTNSLSITRLLLERYKSCRELKDAQLGHGCRQHGNQVHSESWIDLRNREGMTAVHLSVIFNRPEILQLLVKYSANVN</sequence>
<reference key="1">
    <citation type="journal article" date="1998" name="Mol. Gen. Genet.">
        <title>Regulation of cyclic peptide biosynthesis and pathogenicity in Cochliobolus carbonum by TOXEp, a novel protein with a bZIP basic DNA-binding motif and four ankyrin repeats.</title>
        <authorList>
            <person name="Ahn J.-H."/>
            <person name="Walton J.D."/>
        </authorList>
    </citation>
    <scope>NUCLEOTIDE SEQUENCE [GENOMIC DNA]</scope>
    <scope>FUNCTION</scope>
    <scope>DISRUPTION PHENOTYPE</scope>
    <source>
        <strain>ATCC 90305 / SB111 / 2R15</strain>
    </source>
</reference>
<reference key="2">
    <citation type="journal article" date="2001" name="Proc. Natl. Acad. Sci. U.S.A.">
        <title>Regulation of cyclic peptide biosynthesis in a plant pathogenic fungus by a novel transcription factor.</title>
        <authorList>
            <person name="Pedley K.F."/>
            <person name="Walton J.D."/>
        </authorList>
    </citation>
    <scope>FUNCTION</scope>
    <scope>DNA-BINFING</scope>
    <scope>SUBUNIT</scope>
    <source>
        <strain>ATCC 90305 / SB111 / 2R15</strain>
    </source>
</reference>
<reference key="3">
    <citation type="journal article" date="2002" name="Fungal Genet. Biol.">
        <title>An extended physical map of the TOX2 locus of Cochliobolus carbonum required for biosynthesis of HC-toxin.</title>
        <authorList>
            <person name="Ahn J.H."/>
            <person name="Cheng Y.Q."/>
            <person name="Walton J.D."/>
        </authorList>
    </citation>
    <scope>TOX2 CLUSTER ORGANIZATION</scope>
</reference>
<proteinExistence type="evidence at protein level"/>
<dbReference type="EMBL" id="AF038874">
    <property type="protein sequence ID" value="AAD13811.1"/>
    <property type="molecule type" value="Genomic_DNA"/>
</dbReference>
<dbReference type="SMR" id="O74205"/>
<dbReference type="PHI-base" id="PHI:233"/>
<dbReference type="PHI-base" id="PHI:6810"/>
<dbReference type="GO" id="GO:0005634">
    <property type="term" value="C:nucleus"/>
    <property type="evidence" value="ECO:0000314"/>
    <property type="project" value="UniProtKB"/>
</dbReference>
<dbReference type="GO" id="GO:0003677">
    <property type="term" value="F:DNA binding"/>
    <property type="evidence" value="ECO:0007669"/>
    <property type="project" value="UniProtKB-KW"/>
</dbReference>
<dbReference type="GO" id="GO:0003700">
    <property type="term" value="F:DNA-binding transcription factor activity"/>
    <property type="evidence" value="ECO:0007669"/>
    <property type="project" value="InterPro"/>
</dbReference>
<dbReference type="GO" id="GO:0045893">
    <property type="term" value="P:positive regulation of DNA-templated transcription"/>
    <property type="evidence" value="ECO:0000314"/>
    <property type="project" value="UniProtKB"/>
</dbReference>
<dbReference type="GO" id="GO:0006355">
    <property type="term" value="P:regulation of DNA-templated transcription"/>
    <property type="evidence" value="ECO:0000314"/>
    <property type="project" value="UniProtKB"/>
</dbReference>
<dbReference type="GO" id="GO:0009403">
    <property type="term" value="P:toxin biosynthetic process"/>
    <property type="evidence" value="ECO:0000314"/>
    <property type="project" value="UniProtKB"/>
</dbReference>
<dbReference type="CDD" id="cd14688">
    <property type="entry name" value="bZIP_YAP"/>
    <property type="match status" value="1"/>
</dbReference>
<dbReference type="Gene3D" id="1.20.5.170">
    <property type="match status" value="1"/>
</dbReference>
<dbReference type="Gene3D" id="1.25.40.20">
    <property type="entry name" value="Ankyrin repeat-containing domain"/>
    <property type="match status" value="1"/>
</dbReference>
<dbReference type="InterPro" id="IPR002110">
    <property type="entry name" value="Ankyrin_rpt"/>
</dbReference>
<dbReference type="InterPro" id="IPR036770">
    <property type="entry name" value="Ankyrin_rpt-contain_sf"/>
</dbReference>
<dbReference type="InterPro" id="IPR004827">
    <property type="entry name" value="bZIP"/>
</dbReference>
<dbReference type="InterPro" id="IPR046347">
    <property type="entry name" value="bZIP_sf"/>
</dbReference>
<dbReference type="PANTHER" id="PTHR24198">
    <property type="entry name" value="ANKYRIN REPEAT AND PROTEIN KINASE DOMAIN-CONTAINING PROTEIN"/>
    <property type="match status" value="1"/>
</dbReference>
<dbReference type="PANTHER" id="PTHR24198:SF165">
    <property type="entry name" value="ANKYRIN REPEAT-CONTAINING PROTEIN-RELATED"/>
    <property type="match status" value="1"/>
</dbReference>
<dbReference type="Pfam" id="PF00023">
    <property type="entry name" value="Ank"/>
    <property type="match status" value="1"/>
</dbReference>
<dbReference type="Pfam" id="PF12796">
    <property type="entry name" value="Ank_2"/>
    <property type="match status" value="1"/>
</dbReference>
<dbReference type="SMART" id="SM00248">
    <property type="entry name" value="ANK"/>
    <property type="match status" value="4"/>
</dbReference>
<dbReference type="SUPFAM" id="SSF48403">
    <property type="entry name" value="Ankyrin repeat"/>
    <property type="match status" value="1"/>
</dbReference>
<dbReference type="SUPFAM" id="SSF57959">
    <property type="entry name" value="Leucine zipper domain"/>
    <property type="match status" value="1"/>
</dbReference>
<dbReference type="PROSITE" id="PS50297">
    <property type="entry name" value="ANK_REP_REGION"/>
    <property type="match status" value="1"/>
</dbReference>
<dbReference type="PROSITE" id="PS50088">
    <property type="entry name" value="ANK_REPEAT"/>
    <property type="match status" value="4"/>
</dbReference>
<dbReference type="PROSITE" id="PS00036">
    <property type="entry name" value="BZIP_BASIC"/>
    <property type="match status" value="1"/>
</dbReference>
<evidence type="ECO:0000250" key="1">
    <source>
        <dbReference type="UniProtKB" id="S0DPL8"/>
    </source>
</evidence>
<evidence type="ECO:0000255" key="2"/>
<evidence type="ECO:0000256" key="3">
    <source>
        <dbReference type="SAM" id="MobiDB-lite"/>
    </source>
</evidence>
<evidence type="ECO:0000269" key="4">
    <source>
    </source>
</evidence>
<evidence type="ECO:0000269" key="5">
    <source>
    </source>
</evidence>
<evidence type="ECO:0000269" key="6">
    <source>
    </source>
</evidence>
<evidence type="ECO:0000303" key="7">
    <source>
    </source>
</evidence>
<evidence type="ECO:0000303" key="8">
    <source>
    </source>
</evidence>
<evidence type="ECO:0000305" key="9"/>
<evidence type="ECO:0000305" key="10">
    <source>
    </source>
</evidence>
<gene>
    <name evidence="8" type="primary">TOXE</name>
</gene>
<keyword id="KW-0010">Activator</keyword>
<keyword id="KW-0040">ANK repeat</keyword>
<keyword id="KW-0238">DNA-binding</keyword>
<keyword id="KW-0539">Nucleus</keyword>
<keyword id="KW-0677">Repeat</keyword>
<keyword id="KW-0804">Transcription</keyword>
<keyword id="KW-0805">Transcription regulation</keyword>
<accession>O74205</accession>
<comment type="function">
    <text evidence="4 6">Transcription factor, part of the diffuse TOX2 gene cluster that mediates the biosynthesis of the HC-toxin, cyclic tetrapeptide of structure cyclo(D-Pro-L-Ala-D-Ala-L-Aeo), where Aeo stands for 2-amino-9,10-epoxi-8-oxodecanoic acid (PubMed:11698648, PubMed:9894916). HC-toxin is a determinant of specificity and virulence in the interaction between the producing fungus and its host, maize (PubMed:11698648, PubMed:9894916). TOXE is a pathway-specific transcription factor which coordinates the expression of genes involved in HC-toxin biosynthesis (PubMed:9894916). Binds to the tox-box, a 10-bp motif with the consensus 5'-ATCTCNCGNA-3', which is found in the promoter of all genes involved in HC-toxin biosynthesis (PubMed:11698648). Required for pathogenicity of the fungus on maize (PubMed:9894916).</text>
</comment>
<comment type="subunit">
    <text evidence="4">Monomer.</text>
</comment>
<comment type="subcellular location">
    <subcellularLocation>
        <location evidence="10">Nucleus</location>
    </subcellularLocation>
</comment>
<comment type="domain">
    <text evidence="1">Contains a basic DNA-binding region at the N-terminus which is usually found in bZIP transcription factors, but does not contain the characteristic leucine zipper domain. Instead, four C-terminal ankyrin repeats were identified that were shown to confer protein-protein interaction of regulatory proteins.</text>
</comment>
<comment type="disruption phenotype">
    <text evidence="6">Does not affect growth and sporulation but abolishes HC-toxin production and pathogenicity.</text>
</comment>
<comment type="miscellaneous">
    <text evidence="5">The genes involved in HC-toxin biosynthesis, called collectively TOX2, are organized into a diffuse cluster that spans &gt;500 kb. All of the known genes are duplicated or triplicated within this region, with some variation in copy number and chromosomal location among different race 1 strains.</text>
</comment>
<comment type="similarity">
    <text evidence="9">Belongs to the bZIP family.</text>
</comment>
<name>TOXE_COCCA</name>